<keyword id="KW-0158">Chromosome</keyword>
<keyword id="KW-0539">Nucleus</keyword>
<keyword id="KW-1185">Reference proteome</keyword>
<keyword id="KW-0779">Telomere</keyword>
<proteinExistence type="evidence at protein level"/>
<comment type="function">
    <text evidence="1 3">Part of the MTV complex that associates with the HipHop-HOAP complex to form the terminin telomere-capping complex involved in telomere maintenance and prevention of telomere fusion (PubMed:20679394, PubMed:27835648). As part of the MTV complex binds single stranded DNA in a sequence-independent manner, protecting it from degradation (PubMed:27835648).</text>
</comment>
<comment type="subunit">
    <text evidence="1 2 3">Probably homomultimerizes (PubMed:20679394). Component of the MTV complex, composed of moi/modigliani, tea and ver/verrocchio (PubMed:27835648). Interacts with moi/modigliani and tea (via C-terminus); the interactions are direct and require fully intact moi/modigliani and ver/verrocchio (PubMed:20679394, PubMed:27835648). The MTV complex is recruited to telomeres by the HipHop-HOAP complex, consisting of HipHop, cav/HOAP and Su(var)205/HP1 to form the terminin telomere-capping complex (PubMed:20679394, PubMed:27835648). Interacts with cav/HOAP; the interaction is direct (PubMed:20679394). Interacts with Su(var)205/HP1; the interaction is indirect and probably requires cav/HOAP or moi/modigliani (PubMed:20679394). Probably interacts with peo (via N-terminus and UBC domain) (PubMed:26110638).</text>
</comment>
<comment type="subcellular location">
    <subcellularLocation>
        <location evidence="1 2 3">Nucleus</location>
    </subcellularLocation>
    <subcellularLocation>
        <location evidence="1 2 3">Chromosome</location>
    </subcellularLocation>
    <subcellularLocation>
        <location evidence="1 2 3">Chromosome</location>
        <location evidence="1 2 3">Telomere</location>
    </subcellularLocation>
    <text evidence="2 3">Localizes to euchromatic telomeres of polytene chromosomes (PubMed:26110638). Telomere localization is not dependent on peo/pendolino (PubMed:26110638). Telomere localization is dependent on cav/HOAP, tea and moi/modigliani (PubMed:27835648).</text>
</comment>
<comment type="disruption phenotype">
    <text evidence="1">Lethal at the larval/pupal boundary (PubMed:20679394). Frequent telomeric fusions in larval neruoblasts (PubMed:20679394).</text>
</comment>
<comment type="miscellaneous">
    <text evidence="4">Multiple telomeric fusions result in multicentric linear chromosomes that resemble little trains of chromosomes, hence the name 'verrocchio', the name of an Italian train named after the artist.</text>
</comment>
<protein>
    <recommendedName>
        <fullName evidence="4">Protein verrocchio</fullName>
    </recommendedName>
</protein>
<gene>
    <name evidence="7" type="primary">ver</name>
    <name evidence="7" type="ORF">CG14121</name>
</gene>
<accession>Q9VTZ2</accession>
<sequence>MDFNQSFEDIESQLDNFVIRKNQQSEKSTGKCGPEVHDNVPLTISQIERATQDPENENVFITDDVHPIHFCTCIIYAFVTGNGTHNESFMKFMIDDGTGSLEASITKKPFNGRVISSLYSEASSLASSEAYKSIAVSMMRLLQVSMEYIDPTRISRGHSLFLRGRPNRFRGKMGLDAFQFFIDSGRSRNMEIGFVDYLTDWQRRHKTMQNTTNK</sequence>
<organism evidence="8">
    <name type="scientific">Drosophila melanogaster</name>
    <name type="common">Fruit fly</name>
    <dbReference type="NCBI Taxonomy" id="7227"/>
    <lineage>
        <taxon>Eukaryota</taxon>
        <taxon>Metazoa</taxon>
        <taxon>Ecdysozoa</taxon>
        <taxon>Arthropoda</taxon>
        <taxon>Hexapoda</taxon>
        <taxon>Insecta</taxon>
        <taxon>Pterygota</taxon>
        <taxon>Neoptera</taxon>
        <taxon>Endopterygota</taxon>
        <taxon>Diptera</taxon>
        <taxon>Brachycera</taxon>
        <taxon>Muscomorpha</taxon>
        <taxon>Ephydroidea</taxon>
        <taxon>Drosophilidae</taxon>
        <taxon>Drosophila</taxon>
        <taxon>Sophophora</taxon>
    </lineage>
</organism>
<feature type="chain" id="PRO_0000460347" description="Protein verrocchio">
    <location>
        <begin position="1"/>
        <end position="214"/>
    </location>
</feature>
<feature type="mutagenesis site" description="Disrupts interaction with moi/modigliani. Partially rescues null mutant phenotype." evidence="3">
    <original>D</original>
    <variation>G</variation>
    <location>
        <position position="9"/>
    </location>
</feature>
<feature type="mutagenesis site" description="Unable to protect telomeres from fusion events; when associated with E-91 and 169-AE-170." evidence="1">
    <original>F</original>
    <variation>A</variation>
    <location>
        <position position="89"/>
    </location>
</feature>
<feature type="mutagenesis site" description="Unable to protect telomeres from fusion events; when associated with A-89, 169-AE-170." evidence="1">
    <original>K</original>
    <variation>E</variation>
    <location>
        <position position="91"/>
    </location>
</feature>
<feature type="mutagenesis site" description="Disrupts interaction with moi/modigliani. Unable to rescue null mutant phenotype." evidence="3">
    <original>D</original>
    <variation>G</variation>
    <location>
        <position position="96"/>
    </location>
</feature>
<feature type="mutagenesis site" description="Disrupts interaction with moi/modigliani. Unable to rescue null mutant phenotype." evidence="3">
    <original>L</original>
    <variation>P</variation>
    <location>
        <position position="101"/>
    </location>
</feature>
<feature type="mutagenesis site" description="Disrupts interaction with moi/modigliani. Unable to rescue null mutant phenotype." evidence="3">
    <original>L</original>
    <variation>P</variation>
    <location>
        <position position="162"/>
    </location>
</feature>
<feature type="mutagenesis site" description="Unable to protect telomeres from fusion events; when associated with A-89 and E-91." evidence="1">
    <original>FR</original>
    <variation>AE</variation>
    <location>
        <begin position="169"/>
        <end position="170"/>
    </location>
</feature>
<dbReference type="EMBL" id="AE014296">
    <property type="protein sequence ID" value="AAF49903.1"/>
    <property type="molecule type" value="Genomic_DNA"/>
</dbReference>
<dbReference type="EMBL" id="AE014296">
    <property type="protein sequence ID" value="AGB94470.1"/>
    <property type="molecule type" value="Genomic_DNA"/>
</dbReference>
<dbReference type="EMBL" id="BT082062">
    <property type="protein sequence ID" value="ACP28223.1"/>
    <property type="molecule type" value="mRNA"/>
</dbReference>
<dbReference type="RefSeq" id="NP_001261777.1">
    <property type="nucleotide sequence ID" value="NM_001274848.1"/>
</dbReference>
<dbReference type="RefSeq" id="NP_648587.1">
    <property type="nucleotide sequence ID" value="NM_140330.2"/>
</dbReference>
<dbReference type="ComplexPortal" id="CPX-8944">
    <property type="entry name" value="MTV complex"/>
</dbReference>
<dbReference type="FunCoup" id="Q9VTZ2">
    <property type="interactions" value="1"/>
</dbReference>
<dbReference type="IntAct" id="Q9VTZ2">
    <property type="interactions" value="2"/>
</dbReference>
<dbReference type="STRING" id="7227.FBpp0075692"/>
<dbReference type="PaxDb" id="7227-FBpp0075692"/>
<dbReference type="DNASU" id="39432"/>
<dbReference type="EnsemblMetazoa" id="FBtr0075960">
    <property type="protein sequence ID" value="FBpp0075692"/>
    <property type="gene ID" value="FBgn0262524"/>
</dbReference>
<dbReference type="EnsemblMetazoa" id="FBtr0331792">
    <property type="protein sequence ID" value="FBpp0304177"/>
    <property type="gene ID" value="FBgn0262524"/>
</dbReference>
<dbReference type="GeneID" id="39432"/>
<dbReference type="KEGG" id="dme:Dmel_CG14121"/>
<dbReference type="UCSC" id="CG14121-RA">
    <property type="organism name" value="d. melanogaster"/>
</dbReference>
<dbReference type="AGR" id="FB:FBgn0262524"/>
<dbReference type="CTD" id="39432"/>
<dbReference type="FlyBase" id="FBgn0262524">
    <property type="gene designation" value="ver"/>
</dbReference>
<dbReference type="VEuPathDB" id="VectorBase:FBgn0262524"/>
<dbReference type="eggNOG" id="ENOG502TAPI">
    <property type="taxonomic scope" value="Eukaryota"/>
</dbReference>
<dbReference type="HOGENOM" id="CLU_1311269_0_0_1"/>
<dbReference type="OMA" id="GRGVHNK"/>
<dbReference type="OrthoDB" id="7915056at2759"/>
<dbReference type="BioGRID-ORCS" id="39432">
    <property type="hits" value="1 hit in 1 CRISPR screen"/>
</dbReference>
<dbReference type="GenomeRNAi" id="39432"/>
<dbReference type="Proteomes" id="UP000000803">
    <property type="component" value="Chromosome 3L"/>
</dbReference>
<dbReference type="Bgee" id="FBgn0262524">
    <property type="expression patterns" value="Expressed in fat body cell in arthropod fat body and 41 other cell types or tissues"/>
</dbReference>
<dbReference type="GO" id="GO:0005634">
    <property type="term" value="C:nucleus"/>
    <property type="evidence" value="ECO:0007669"/>
    <property type="project" value="UniProtKB-SubCell"/>
</dbReference>
<dbReference type="GO" id="GO:0000782">
    <property type="term" value="C:telomere cap complex"/>
    <property type="evidence" value="ECO:0000314"/>
    <property type="project" value="FlyBase"/>
</dbReference>
<dbReference type="GO" id="GO:0042162">
    <property type="term" value="F:telomeric DNA binding"/>
    <property type="evidence" value="ECO:0000318"/>
    <property type="project" value="GO_Central"/>
</dbReference>
<dbReference type="GO" id="GO:0016233">
    <property type="term" value="P:telomere capping"/>
    <property type="evidence" value="ECO:0000315"/>
    <property type="project" value="FlyBase"/>
</dbReference>
<dbReference type="GO" id="GO:0000723">
    <property type="term" value="P:telomere maintenance"/>
    <property type="evidence" value="ECO:0000315"/>
    <property type="project" value="FlyBase"/>
</dbReference>
<dbReference type="Gene3D" id="2.40.50.140">
    <property type="entry name" value="Nucleic acid-binding proteins"/>
    <property type="match status" value="1"/>
</dbReference>
<dbReference type="InterPro" id="IPR012340">
    <property type="entry name" value="NA-bd_OB-fold"/>
</dbReference>
<reference evidence="8" key="1">
    <citation type="journal article" date="2000" name="Science">
        <title>The genome sequence of Drosophila melanogaster.</title>
        <authorList>
            <person name="Adams M.D."/>
            <person name="Celniker S.E."/>
            <person name="Holt R.A."/>
            <person name="Evans C.A."/>
            <person name="Gocayne J.D."/>
            <person name="Amanatides P.G."/>
            <person name="Scherer S.E."/>
            <person name="Li P.W."/>
            <person name="Hoskins R.A."/>
            <person name="Galle R.F."/>
            <person name="George R.A."/>
            <person name="Lewis S.E."/>
            <person name="Richards S."/>
            <person name="Ashburner M."/>
            <person name="Henderson S.N."/>
            <person name="Sutton G.G."/>
            <person name="Wortman J.R."/>
            <person name="Yandell M.D."/>
            <person name="Zhang Q."/>
            <person name="Chen L.X."/>
            <person name="Brandon R.C."/>
            <person name="Rogers Y.-H.C."/>
            <person name="Blazej R.G."/>
            <person name="Champe M."/>
            <person name="Pfeiffer B.D."/>
            <person name="Wan K.H."/>
            <person name="Doyle C."/>
            <person name="Baxter E.G."/>
            <person name="Helt G."/>
            <person name="Nelson C.R."/>
            <person name="Miklos G.L.G."/>
            <person name="Abril J.F."/>
            <person name="Agbayani A."/>
            <person name="An H.-J."/>
            <person name="Andrews-Pfannkoch C."/>
            <person name="Baldwin D."/>
            <person name="Ballew R.M."/>
            <person name="Basu A."/>
            <person name="Baxendale J."/>
            <person name="Bayraktaroglu L."/>
            <person name="Beasley E.M."/>
            <person name="Beeson K.Y."/>
            <person name="Benos P.V."/>
            <person name="Berman B.P."/>
            <person name="Bhandari D."/>
            <person name="Bolshakov S."/>
            <person name="Borkova D."/>
            <person name="Botchan M.R."/>
            <person name="Bouck J."/>
            <person name="Brokstein P."/>
            <person name="Brottier P."/>
            <person name="Burtis K.C."/>
            <person name="Busam D.A."/>
            <person name="Butler H."/>
            <person name="Cadieu E."/>
            <person name="Center A."/>
            <person name="Chandra I."/>
            <person name="Cherry J.M."/>
            <person name="Cawley S."/>
            <person name="Dahlke C."/>
            <person name="Davenport L.B."/>
            <person name="Davies P."/>
            <person name="de Pablos B."/>
            <person name="Delcher A."/>
            <person name="Deng Z."/>
            <person name="Mays A.D."/>
            <person name="Dew I."/>
            <person name="Dietz S.M."/>
            <person name="Dodson K."/>
            <person name="Doup L.E."/>
            <person name="Downes M."/>
            <person name="Dugan-Rocha S."/>
            <person name="Dunkov B.C."/>
            <person name="Dunn P."/>
            <person name="Durbin K.J."/>
            <person name="Evangelista C.C."/>
            <person name="Ferraz C."/>
            <person name="Ferriera S."/>
            <person name="Fleischmann W."/>
            <person name="Fosler C."/>
            <person name="Gabrielian A.E."/>
            <person name="Garg N.S."/>
            <person name="Gelbart W.M."/>
            <person name="Glasser K."/>
            <person name="Glodek A."/>
            <person name="Gong F."/>
            <person name="Gorrell J.H."/>
            <person name="Gu Z."/>
            <person name="Guan P."/>
            <person name="Harris M."/>
            <person name="Harris N.L."/>
            <person name="Harvey D.A."/>
            <person name="Heiman T.J."/>
            <person name="Hernandez J.R."/>
            <person name="Houck J."/>
            <person name="Hostin D."/>
            <person name="Houston K.A."/>
            <person name="Howland T.J."/>
            <person name="Wei M.-H."/>
            <person name="Ibegwam C."/>
            <person name="Jalali M."/>
            <person name="Kalush F."/>
            <person name="Karpen G.H."/>
            <person name="Ke Z."/>
            <person name="Kennison J.A."/>
            <person name="Ketchum K.A."/>
            <person name="Kimmel B.E."/>
            <person name="Kodira C.D."/>
            <person name="Kraft C.L."/>
            <person name="Kravitz S."/>
            <person name="Kulp D."/>
            <person name="Lai Z."/>
            <person name="Lasko P."/>
            <person name="Lei Y."/>
            <person name="Levitsky A.A."/>
            <person name="Li J.H."/>
            <person name="Li Z."/>
            <person name="Liang Y."/>
            <person name="Lin X."/>
            <person name="Liu X."/>
            <person name="Mattei B."/>
            <person name="McIntosh T.C."/>
            <person name="McLeod M.P."/>
            <person name="McPherson D."/>
            <person name="Merkulov G."/>
            <person name="Milshina N.V."/>
            <person name="Mobarry C."/>
            <person name="Morris J."/>
            <person name="Moshrefi A."/>
            <person name="Mount S.M."/>
            <person name="Moy M."/>
            <person name="Murphy B."/>
            <person name="Murphy L."/>
            <person name="Muzny D.M."/>
            <person name="Nelson D.L."/>
            <person name="Nelson D.R."/>
            <person name="Nelson K.A."/>
            <person name="Nixon K."/>
            <person name="Nusskern D.R."/>
            <person name="Pacleb J.M."/>
            <person name="Palazzolo M."/>
            <person name="Pittman G.S."/>
            <person name="Pan S."/>
            <person name="Pollard J."/>
            <person name="Puri V."/>
            <person name="Reese M.G."/>
            <person name="Reinert K."/>
            <person name="Remington K."/>
            <person name="Saunders R.D.C."/>
            <person name="Scheeler F."/>
            <person name="Shen H."/>
            <person name="Shue B.C."/>
            <person name="Siden-Kiamos I."/>
            <person name="Simpson M."/>
            <person name="Skupski M.P."/>
            <person name="Smith T.J."/>
            <person name="Spier E."/>
            <person name="Spradling A.C."/>
            <person name="Stapleton M."/>
            <person name="Strong R."/>
            <person name="Sun E."/>
            <person name="Svirskas R."/>
            <person name="Tector C."/>
            <person name="Turner R."/>
            <person name="Venter E."/>
            <person name="Wang A.H."/>
            <person name="Wang X."/>
            <person name="Wang Z.-Y."/>
            <person name="Wassarman D.A."/>
            <person name="Weinstock G.M."/>
            <person name="Weissenbach J."/>
            <person name="Williams S.M."/>
            <person name="Woodage T."/>
            <person name="Worley K.C."/>
            <person name="Wu D."/>
            <person name="Yang S."/>
            <person name="Yao Q.A."/>
            <person name="Ye J."/>
            <person name="Yeh R.-F."/>
            <person name="Zaveri J.S."/>
            <person name="Zhan M."/>
            <person name="Zhang G."/>
            <person name="Zhao Q."/>
            <person name="Zheng L."/>
            <person name="Zheng X.H."/>
            <person name="Zhong F.N."/>
            <person name="Zhong W."/>
            <person name="Zhou X."/>
            <person name="Zhu S.C."/>
            <person name="Zhu X."/>
            <person name="Smith H.O."/>
            <person name="Gibbs R.A."/>
            <person name="Myers E.W."/>
            <person name="Rubin G.M."/>
            <person name="Venter J.C."/>
        </authorList>
    </citation>
    <scope>NUCLEOTIDE SEQUENCE [LARGE SCALE GENOMIC DNA]</scope>
    <source>
        <strain evidence="8">Berkeley</strain>
    </source>
</reference>
<reference evidence="8" key="2">
    <citation type="journal article" date="2002" name="Genome Biol.">
        <title>Annotation of the Drosophila melanogaster euchromatic genome: a systematic review.</title>
        <authorList>
            <person name="Misra S."/>
            <person name="Crosby M.A."/>
            <person name="Mungall C.J."/>
            <person name="Matthews B.B."/>
            <person name="Campbell K.S."/>
            <person name="Hradecky P."/>
            <person name="Huang Y."/>
            <person name="Kaminker J.S."/>
            <person name="Millburn G.H."/>
            <person name="Prochnik S.E."/>
            <person name="Smith C.D."/>
            <person name="Tupy J.L."/>
            <person name="Whitfield E.J."/>
            <person name="Bayraktaroglu L."/>
            <person name="Berman B.P."/>
            <person name="Bettencourt B.R."/>
            <person name="Celniker S.E."/>
            <person name="de Grey A.D.N.J."/>
            <person name="Drysdale R.A."/>
            <person name="Harris N.L."/>
            <person name="Richter J."/>
            <person name="Russo S."/>
            <person name="Schroeder A.J."/>
            <person name="Shu S.Q."/>
            <person name="Stapleton M."/>
            <person name="Yamada C."/>
            <person name="Ashburner M."/>
            <person name="Gelbart W.M."/>
            <person name="Rubin G.M."/>
            <person name="Lewis S.E."/>
        </authorList>
    </citation>
    <scope>GENOME REANNOTATION</scope>
    <source>
        <strain evidence="8">Berkeley</strain>
    </source>
</reference>
<reference evidence="6" key="3">
    <citation type="submission" date="2009-04" db="EMBL/GenBank/DDBJ databases">
        <authorList>
            <person name="Carlson J."/>
            <person name="Booth B."/>
            <person name="Frise E."/>
            <person name="Park S."/>
            <person name="Wan K."/>
            <person name="Yu C."/>
            <person name="Celniker S."/>
        </authorList>
    </citation>
    <scope>NUCLEOTIDE SEQUENCE [LARGE SCALE MRNA]</scope>
</reference>
<reference evidence="5" key="4">
    <citation type="journal article" date="2010" name="Genes Dev.">
        <title>Verrocchio, a Drosophila OB fold-containing protein, is a component of the terminin telomere-capping complex.</title>
        <authorList>
            <person name="Raffa G.D."/>
            <person name="Raimondo D."/>
            <person name="Sorino C."/>
            <person name="Cugusi S."/>
            <person name="Cenci G."/>
            <person name="Cacchione S."/>
            <person name="Gatti M."/>
            <person name="Ciapponi L."/>
        </authorList>
    </citation>
    <scope>FUNCTION</scope>
    <scope>SUBUNIT</scope>
    <scope>INTERACTION WITH CAV; SU(VAR)205 AND MOI</scope>
    <scope>SUBCELLULAR LOCATION</scope>
    <scope>DISRUPTION PHENOTYPE</scope>
    <scope>MUTAGENESIS OF PHE-89; LYS-91 AND 169-PHE-ARG-170</scope>
</reference>
<reference evidence="5" key="5">
    <citation type="journal article" date="2015" name="PLoS Genet.">
        <title>The Analysis of Pendolino (peo) Mutants Reveals Differences in the Fusigenic Potential among Drosophila Telomeres.</title>
        <authorList>
            <person name="Cenci G."/>
            <person name="Ciapponi L."/>
            <person name="Marzullo M."/>
            <person name="Raffa G.D."/>
            <person name="Morciano P."/>
            <person name="Raimondo D."/>
            <person name="Burla R."/>
            <person name="Saggio I."/>
            <person name="Gatti M."/>
        </authorList>
    </citation>
    <scope>INTERACTION WITH PEO</scope>
    <scope>SUBCELLULAR LOCATION</scope>
</reference>
<reference evidence="5" key="6">
    <citation type="journal article" date="2016" name="PLoS Genet.">
        <title>MTV, an ssDNA Protecting Complex Essential for Transposon-Based Telomere Maintenance in Drosophila.</title>
        <authorList>
            <person name="Zhang Y."/>
            <person name="Zhang L."/>
            <person name="Tang X."/>
            <person name="Bhardwaj S.R."/>
            <person name="Ji J."/>
            <person name="Rong Y.S."/>
        </authorList>
    </citation>
    <scope>FUNCTION</scope>
    <scope>INTERACTION WITH MOI AND TEA</scope>
    <scope>SUBCELLULAR LOCATION</scope>
    <scope>MUTAGENESIS OF ASP-9; ASP-96; LEU-101 AND LEU-162</scope>
</reference>
<name>VERR_DROME</name>
<evidence type="ECO:0000269" key="1">
    <source>
    </source>
</evidence>
<evidence type="ECO:0000269" key="2">
    <source>
    </source>
</evidence>
<evidence type="ECO:0000269" key="3">
    <source>
    </source>
</evidence>
<evidence type="ECO:0000303" key="4">
    <source>
    </source>
</evidence>
<evidence type="ECO:0000305" key="5"/>
<evidence type="ECO:0000312" key="6">
    <source>
        <dbReference type="EMBL" id="ACP28223.1"/>
    </source>
</evidence>
<evidence type="ECO:0000312" key="7">
    <source>
        <dbReference type="FlyBase" id="FBgn0262524"/>
    </source>
</evidence>
<evidence type="ECO:0000312" key="8">
    <source>
        <dbReference type="Proteomes" id="UP000000803"/>
    </source>
</evidence>